<proteinExistence type="inferred from homology"/>
<feature type="chain" id="PRO_0000377575" description="Vacuolar ATPase assembly integral membrane protein VMA21 homolog">
    <location>
        <begin position="1"/>
        <end position="105"/>
    </location>
</feature>
<feature type="topological domain" description="Cytoplasmic" evidence="1">
    <location>
        <begin position="1"/>
        <end position="36"/>
    </location>
</feature>
<feature type="transmembrane region" description="Helical" evidence="1">
    <location>
        <begin position="37"/>
        <end position="57"/>
    </location>
</feature>
<feature type="topological domain" description="Lumenal" evidence="1">
    <location>
        <begin position="58"/>
        <end position="68"/>
    </location>
</feature>
<feature type="transmembrane region" description="Helical" evidence="1">
    <location>
        <begin position="69"/>
        <end position="89"/>
    </location>
</feature>
<feature type="topological domain" description="Cytoplasmic" evidence="1">
    <location>
        <begin position="90"/>
        <end position="105"/>
    </location>
</feature>
<feature type="region of interest" description="Disordered" evidence="2">
    <location>
        <begin position="1"/>
        <end position="26"/>
    </location>
</feature>
<sequence>MSTKNKKAAGGNGGAPKQTRQQSHDSQDYSSFKTVLFYCMLIVFLPVLTFFVLKGFVLDQFLDISEVKVNIASAVGAVVALHIALGLYIYRAYFGAPGSKGSKTD</sequence>
<gene>
    <name type="ORF">GD14890</name>
</gene>
<evidence type="ECO:0000255" key="1">
    <source>
        <dbReference type="HAMAP-Rule" id="MF_03058"/>
    </source>
</evidence>
<evidence type="ECO:0000256" key="2">
    <source>
        <dbReference type="SAM" id="MobiDB-lite"/>
    </source>
</evidence>
<comment type="function">
    <text evidence="1">Required for the assembly of the V0 complex of the vacuolar ATPase (V-ATPase) in the endoplasmic reticulum.</text>
</comment>
<comment type="subcellular location">
    <subcellularLocation>
        <location evidence="1">Endoplasmic reticulum membrane</location>
        <topology evidence="1">Multi-pass membrane protein</topology>
    </subcellularLocation>
    <subcellularLocation>
        <location evidence="1">Endoplasmic reticulum-Golgi intermediate compartment membrane</location>
        <topology evidence="1">Multi-pass membrane protein</topology>
    </subcellularLocation>
    <subcellularLocation>
        <location evidence="1">Cytoplasmic vesicle</location>
        <location evidence="1">COPII-coated vesicle membrane</location>
        <topology evidence="1">Multi-pass membrane protein</topology>
    </subcellularLocation>
</comment>
<comment type="similarity">
    <text evidence="1">Belongs to the VMA21 family.</text>
</comment>
<keyword id="KW-0968">Cytoplasmic vesicle</keyword>
<keyword id="KW-0256">Endoplasmic reticulum</keyword>
<keyword id="KW-0472">Membrane</keyword>
<keyword id="KW-1185">Reference proteome</keyword>
<keyword id="KW-0812">Transmembrane</keyword>
<keyword id="KW-1133">Transmembrane helix</keyword>
<name>VMA21_DROSI</name>
<dbReference type="EMBL" id="CM000363">
    <property type="protein sequence ID" value="EDX11250.1"/>
    <property type="molecule type" value="Genomic_DNA"/>
</dbReference>
<dbReference type="SMR" id="B4QJ33"/>
<dbReference type="STRING" id="7240.B4QJ33"/>
<dbReference type="EnsemblMetazoa" id="FBtr0214800">
    <property type="protein sequence ID" value="FBpp0213292"/>
    <property type="gene ID" value="FBgn0186562"/>
</dbReference>
<dbReference type="EnsemblMetazoa" id="XM_002085629.4">
    <property type="protein sequence ID" value="XP_002085665.1"/>
    <property type="gene ID" value="LOC6738870"/>
</dbReference>
<dbReference type="GeneID" id="6738870"/>
<dbReference type="HOGENOM" id="CLU_143588_2_0_1"/>
<dbReference type="OMA" id="PYFRGNE"/>
<dbReference type="OrthoDB" id="160405at2759"/>
<dbReference type="PhylomeDB" id="B4QJ33"/>
<dbReference type="Proteomes" id="UP000000304">
    <property type="component" value="Chromosome 3L"/>
</dbReference>
<dbReference type="Bgee" id="FBgn0186562">
    <property type="expression patterns" value="Expressed in embryo and 3 other cell types or tissues"/>
</dbReference>
<dbReference type="GO" id="GO:0005789">
    <property type="term" value="C:endoplasmic reticulum membrane"/>
    <property type="evidence" value="ECO:0007669"/>
    <property type="project" value="UniProtKB-SubCell"/>
</dbReference>
<dbReference type="GO" id="GO:0033116">
    <property type="term" value="C:endoplasmic reticulum-Golgi intermediate compartment membrane"/>
    <property type="evidence" value="ECO:0007669"/>
    <property type="project" value="UniProtKB-SubCell"/>
</dbReference>
<dbReference type="GO" id="GO:0012507">
    <property type="term" value="C:ER to Golgi transport vesicle membrane"/>
    <property type="evidence" value="ECO:0007669"/>
    <property type="project" value="UniProtKB-SubCell"/>
</dbReference>
<dbReference type="GO" id="GO:0070072">
    <property type="term" value="P:vacuolar proton-transporting V-type ATPase complex assembly"/>
    <property type="evidence" value="ECO:0007669"/>
    <property type="project" value="UniProtKB-UniRule"/>
</dbReference>
<dbReference type="HAMAP" id="MF_03058">
    <property type="entry name" value="VMA21"/>
    <property type="match status" value="1"/>
</dbReference>
<dbReference type="InterPro" id="IPR019013">
    <property type="entry name" value="Vma21"/>
</dbReference>
<dbReference type="Pfam" id="PF09446">
    <property type="entry name" value="VMA21"/>
    <property type="match status" value="1"/>
</dbReference>
<reference key="1">
    <citation type="journal article" date="2007" name="Nature">
        <title>Evolution of genes and genomes on the Drosophila phylogeny.</title>
        <authorList>
            <consortium name="Drosophila 12 genomes consortium"/>
        </authorList>
    </citation>
    <scope>NUCLEOTIDE SEQUENCE [LARGE SCALE GENOMIC DNA]</scope>
</reference>
<accession>B4QJ33</accession>
<organism>
    <name type="scientific">Drosophila simulans</name>
    <name type="common">Fruit fly</name>
    <dbReference type="NCBI Taxonomy" id="7240"/>
    <lineage>
        <taxon>Eukaryota</taxon>
        <taxon>Metazoa</taxon>
        <taxon>Ecdysozoa</taxon>
        <taxon>Arthropoda</taxon>
        <taxon>Hexapoda</taxon>
        <taxon>Insecta</taxon>
        <taxon>Pterygota</taxon>
        <taxon>Neoptera</taxon>
        <taxon>Endopterygota</taxon>
        <taxon>Diptera</taxon>
        <taxon>Brachycera</taxon>
        <taxon>Muscomorpha</taxon>
        <taxon>Ephydroidea</taxon>
        <taxon>Drosophilidae</taxon>
        <taxon>Drosophila</taxon>
        <taxon>Sophophora</taxon>
    </lineage>
</organism>
<protein>
    <recommendedName>
        <fullName evidence="1">Vacuolar ATPase assembly integral membrane protein VMA21 homolog</fullName>
    </recommendedName>
</protein>